<dbReference type="EC" id="2.3.1.129" evidence="1"/>
<dbReference type="EMBL" id="CP000950">
    <property type="protein sequence ID" value="ACA67379.1"/>
    <property type="molecule type" value="Genomic_DNA"/>
</dbReference>
<dbReference type="RefSeq" id="WP_002212143.1">
    <property type="nucleotide sequence ID" value="NZ_CP009792.1"/>
</dbReference>
<dbReference type="SMR" id="B1JQH2"/>
<dbReference type="GeneID" id="57977505"/>
<dbReference type="KEGG" id="ypy:YPK_1078"/>
<dbReference type="PATRIC" id="fig|502800.11.peg.1710"/>
<dbReference type="UniPathway" id="UPA00359">
    <property type="reaction ID" value="UER00477"/>
</dbReference>
<dbReference type="GO" id="GO:0005737">
    <property type="term" value="C:cytoplasm"/>
    <property type="evidence" value="ECO:0007669"/>
    <property type="project" value="UniProtKB-SubCell"/>
</dbReference>
<dbReference type="GO" id="GO:0016020">
    <property type="term" value="C:membrane"/>
    <property type="evidence" value="ECO:0007669"/>
    <property type="project" value="GOC"/>
</dbReference>
<dbReference type="GO" id="GO:0008780">
    <property type="term" value="F:acyl-[acyl-carrier-protein]-UDP-N-acetylglucosamine O-acyltransferase activity"/>
    <property type="evidence" value="ECO:0007669"/>
    <property type="project" value="UniProtKB-UniRule"/>
</dbReference>
<dbReference type="GO" id="GO:0009245">
    <property type="term" value="P:lipid A biosynthetic process"/>
    <property type="evidence" value="ECO:0007669"/>
    <property type="project" value="UniProtKB-UniRule"/>
</dbReference>
<dbReference type="CDD" id="cd03351">
    <property type="entry name" value="LbH_UDP-GlcNAc_AT"/>
    <property type="match status" value="1"/>
</dbReference>
<dbReference type="FunFam" id="1.20.1180.10:FF:000001">
    <property type="entry name" value="Acyl-[acyl-carrier-protein]--UDP-N-acetylglucosamine O-acyltransferase"/>
    <property type="match status" value="1"/>
</dbReference>
<dbReference type="FunFam" id="2.160.10.10:FF:000003">
    <property type="entry name" value="Acyl-[acyl-carrier-protein]--UDP-N-acetylglucosamine O-acyltransferase"/>
    <property type="match status" value="1"/>
</dbReference>
<dbReference type="Gene3D" id="2.160.10.10">
    <property type="entry name" value="Hexapeptide repeat proteins"/>
    <property type="match status" value="1"/>
</dbReference>
<dbReference type="Gene3D" id="1.20.1180.10">
    <property type="entry name" value="Udp N-acetylglucosamine O-acyltransferase, C-terminal domain"/>
    <property type="match status" value="1"/>
</dbReference>
<dbReference type="HAMAP" id="MF_00387">
    <property type="entry name" value="LpxA"/>
    <property type="match status" value="1"/>
</dbReference>
<dbReference type="InterPro" id="IPR029098">
    <property type="entry name" value="Acetyltransf_C"/>
</dbReference>
<dbReference type="InterPro" id="IPR037157">
    <property type="entry name" value="Acetyltransf_C_sf"/>
</dbReference>
<dbReference type="InterPro" id="IPR001451">
    <property type="entry name" value="Hexapep"/>
</dbReference>
<dbReference type="InterPro" id="IPR018357">
    <property type="entry name" value="Hexapep_transf_CS"/>
</dbReference>
<dbReference type="InterPro" id="IPR010137">
    <property type="entry name" value="Lipid_A_LpxA"/>
</dbReference>
<dbReference type="InterPro" id="IPR011004">
    <property type="entry name" value="Trimer_LpxA-like_sf"/>
</dbReference>
<dbReference type="NCBIfam" id="TIGR01852">
    <property type="entry name" value="lipid_A_lpxA"/>
    <property type="match status" value="1"/>
</dbReference>
<dbReference type="NCBIfam" id="NF003657">
    <property type="entry name" value="PRK05289.1"/>
    <property type="match status" value="1"/>
</dbReference>
<dbReference type="PANTHER" id="PTHR43480">
    <property type="entry name" value="ACYL-[ACYL-CARRIER-PROTEIN]--UDP-N-ACETYLGLUCOSAMINE O-ACYLTRANSFERASE"/>
    <property type="match status" value="1"/>
</dbReference>
<dbReference type="PANTHER" id="PTHR43480:SF1">
    <property type="entry name" value="ACYL-[ACYL-CARRIER-PROTEIN]--UDP-N-ACETYLGLUCOSAMINE O-ACYLTRANSFERASE, MITOCHONDRIAL-RELATED"/>
    <property type="match status" value="1"/>
</dbReference>
<dbReference type="Pfam" id="PF13720">
    <property type="entry name" value="Acetyltransf_11"/>
    <property type="match status" value="1"/>
</dbReference>
<dbReference type="Pfam" id="PF00132">
    <property type="entry name" value="Hexapep"/>
    <property type="match status" value="2"/>
</dbReference>
<dbReference type="PIRSF" id="PIRSF000456">
    <property type="entry name" value="UDP-GlcNAc_acltr"/>
    <property type="match status" value="1"/>
</dbReference>
<dbReference type="SUPFAM" id="SSF51161">
    <property type="entry name" value="Trimeric LpxA-like enzymes"/>
    <property type="match status" value="1"/>
</dbReference>
<dbReference type="PROSITE" id="PS00101">
    <property type="entry name" value="HEXAPEP_TRANSFERASES"/>
    <property type="match status" value="2"/>
</dbReference>
<organism>
    <name type="scientific">Yersinia pseudotuberculosis serotype O:3 (strain YPIII)</name>
    <dbReference type="NCBI Taxonomy" id="502800"/>
    <lineage>
        <taxon>Bacteria</taxon>
        <taxon>Pseudomonadati</taxon>
        <taxon>Pseudomonadota</taxon>
        <taxon>Gammaproteobacteria</taxon>
        <taxon>Enterobacterales</taxon>
        <taxon>Yersiniaceae</taxon>
        <taxon>Yersinia</taxon>
    </lineage>
</organism>
<protein>
    <recommendedName>
        <fullName evidence="1">Acyl-[acyl-carrier-protein]--UDP-N-acetylglucosamine O-acyltransferase</fullName>
        <shortName evidence="1">UDP-N-acetylglucosamine acyltransferase</shortName>
        <ecNumber evidence="1">2.3.1.129</ecNumber>
    </recommendedName>
</protein>
<name>LPXA_YERPY</name>
<accession>B1JQH2</accession>
<evidence type="ECO:0000255" key="1">
    <source>
        <dbReference type="HAMAP-Rule" id="MF_00387"/>
    </source>
</evidence>
<gene>
    <name evidence="1" type="primary">lpxA</name>
    <name type="ordered locus">YPK_1078</name>
</gene>
<keyword id="KW-0012">Acyltransferase</keyword>
<keyword id="KW-0963">Cytoplasm</keyword>
<keyword id="KW-0441">Lipid A biosynthesis</keyword>
<keyword id="KW-0444">Lipid biosynthesis</keyword>
<keyword id="KW-0443">Lipid metabolism</keyword>
<keyword id="KW-0677">Repeat</keyword>
<keyword id="KW-0808">Transferase</keyword>
<comment type="function">
    <text evidence="1">Involved in the biosynthesis of lipid A, a phosphorylated glycolipid that anchors the lipopolysaccharide to the outer membrane of the cell.</text>
</comment>
<comment type="catalytic activity">
    <reaction evidence="1">
        <text>a (3R)-hydroxyacyl-[ACP] + UDP-N-acetyl-alpha-D-glucosamine = a UDP-3-O-[(3R)-3-hydroxyacyl]-N-acetyl-alpha-D-glucosamine + holo-[ACP]</text>
        <dbReference type="Rhea" id="RHEA:67812"/>
        <dbReference type="Rhea" id="RHEA-COMP:9685"/>
        <dbReference type="Rhea" id="RHEA-COMP:9945"/>
        <dbReference type="ChEBI" id="CHEBI:57705"/>
        <dbReference type="ChEBI" id="CHEBI:64479"/>
        <dbReference type="ChEBI" id="CHEBI:78827"/>
        <dbReference type="ChEBI" id="CHEBI:173225"/>
        <dbReference type="EC" id="2.3.1.129"/>
    </reaction>
</comment>
<comment type="pathway">
    <text evidence="1">Glycolipid biosynthesis; lipid IV(A) biosynthesis; lipid IV(A) from (3R)-3-hydroxytetradecanoyl-[acyl-carrier-protein] and UDP-N-acetyl-alpha-D-glucosamine: step 1/6.</text>
</comment>
<comment type="subunit">
    <text evidence="1">Homotrimer.</text>
</comment>
<comment type="subcellular location">
    <subcellularLocation>
        <location evidence="1">Cytoplasm</location>
    </subcellularLocation>
</comment>
<comment type="similarity">
    <text evidence="1">Belongs to the transferase hexapeptide repeat family. LpxA subfamily.</text>
</comment>
<sequence>MIDKTAFIHPSSIVEEGAIIGAGVYIGPFCIVGSQVEIGAGTELKSHVVVNGITKIGCDNQIYQFASIGEANQDLKYAGEPTRVEVGDRNRIRESVTIHRGTTQGGGVTKVGCDNLLMVNTHVAHDCVIGNRCILANNAALGGHVEIDDYAIIGGMTAIHQFCVIGAHVMVGGCSGITQDVPPFVIAQGNHATPFGINIEGLKRRGFDKESLHAIRSAYKLLYRSGRTLDEVKPEIAELAEQYPVVKAFNDFFARSTRGIIR</sequence>
<feature type="chain" id="PRO_1000190871" description="Acyl-[acyl-carrier-protein]--UDP-N-acetylglucosamine O-acyltransferase">
    <location>
        <begin position="1"/>
        <end position="262"/>
    </location>
</feature>
<proteinExistence type="inferred from homology"/>
<reference key="1">
    <citation type="submission" date="2008-02" db="EMBL/GenBank/DDBJ databases">
        <title>Complete sequence of Yersinia pseudotuberculosis YPIII.</title>
        <authorList>
            <consortium name="US DOE Joint Genome Institute"/>
            <person name="Copeland A."/>
            <person name="Lucas S."/>
            <person name="Lapidus A."/>
            <person name="Glavina del Rio T."/>
            <person name="Dalin E."/>
            <person name="Tice H."/>
            <person name="Bruce D."/>
            <person name="Goodwin L."/>
            <person name="Pitluck S."/>
            <person name="Munk A.C."/>
            <person name="Brettin T."/>
            <person name="Detter J.C."/>
            <person name="Han C."/>
            <person name="Tapia R."/>
            <person name="Schmutz J."/>
            <person name="Larimer F."/>
            <person name="Land M."/>
            <person name="Hauser L."/>
            <person name="Challacombe J.F."/>
            <person name="Green L."/>
            <person name="Lindler L.E."/>
            <person name="Nikolich M.P."/>
            <person name="Richardson P."/>
        </authorList>
    </citation>
    <scope>NUCLEOTIDE SEQUENCE [LARGE SCALE GENOMIC DNA]</scope>
    <source>
        <strain>YPIII</strain>
    </source>
</reference>